<keyword id="KW-0539">Nucleus</keyword>
<keyword id="KW-1185">Reference proteome</keyword>
<keyword id="KW-0690">Ribosome biogenesis</keyword>
<feature type="chain" id="PRO_0000156439" description="RNA 3'-terminal phosphate cyclase-like protein">
    <location>
        <begin position="1"/>
        <end position="373"/>
    </location>
</feature>
<comment type="function">
    <text evidence="1">As part of the small subunit (SSU) processome, it plays a role in 40S-ribosomal-subunit biogenesis in the early pre-rRNA processing steps at sites A0, A1 and A2 that are required for proper maturation of the 18S RNA (By similarity). Activates BMS1 by promoting GDP/GTP exchange (By similarity). Does not have cyclase activity (By similarity).</text>
</comment>
<comment type="subunit">
    <text evidence="2">Part of the small subunit (SSU) processome, composed of more than 70 proteins and the RNA chaperone small nucleolar RNA (snoRNA) U3. Interacts with BMS1.</text>
</comment>
<comment type="subcellular location">
    <subcellularLocation>
        <location evidence="2">Nucleus</location>
        <location evidence="2">Nucleolus</location>
    </subcellularLocation>
</comment>
<comment type="similarity">
    <text evidence="3">Belongs to the RNA 3'-terminal cyclase family. Type 2 subfamily.</text>
</comment>
<proteinExistence type="evidence at transcript level"/>
<dbReference type="EMBL" id="AJ276895">
    <property type="protein sequence ID" value="CAB89817.1"/>
    <property type="molecule type" value="mRNA"/>
</dbReference>
<dbReference type="EMBL" id="AK009709">
    <property type="protein sequence ID" value="BAB26454.1"/>
    <property type="molecule type" value="mRNA"/>
</dbReference>
<dbReference type="EMBL" id="BC004574">
    <property type="protein sequence ID" value="AAH04574.1"/>
    <property type="molecule type" value="mRNA"/>
</dbReference>
<dbReference type="CCDS" id="CCDS29731.1"/>
<dbReference type="RefSeq" id="NP_067500.1">
    <property type="nucleotide sequence ID" value="NM_021525.2"/>
</dbReference>
<dbReference type="SMR" id="Q9JJT0"/>
<dbReference type="BioGRID" id="208495">
    <property type="interactions" value="16"/>
</dbReference>
<dbReference type="FunCoup" id="Q9JJT0">
    <property type="interactions" value="1710"/>
</dbReference>
<dbReference type="STRING" id="10090.ENSMUSP00000067579"/>
<dbReference type="iPTMnet" id="Q9JJT0"/>
<dbReference type="PhosphoSitePlus" id="Q9JJT0"/>
<dbReference type="PaxDb" id="10090-ENSMUSP00000067579"/>
<dbReference type="PeptideAtlas" id="Q9JJT0"/>
<dbReference type="ProteomicsDB" id="300325"/>
<dbReference type="Pumba" id="Q9JJT0"/>
<dbReference type="Antibodypedia" id="24072">
    <property type="antibodies" value="154 antibodies from 25 providers"/>
</dbReference>
<dbReference type="DNASU" id="59028"/>
<dbReference type="Ensembl" id="ENSMUST00000064393.6">
    <property type="protein sequence ID" value="ENSMUSP00000067579.6"/>
    <property type="gene ID" value="ENSMUSG00000024785.8"/>
</dbReference>
<dbReference type="GeneID" id="59028"/>
<dbReference type="KEGG" id="mmu:59028"/>
<dbReference type="UCSC" id="uc008hda.1">
    <property type="organism name" value="mouse"/>
</dbReference>
<dbReference type="AGR" id="MGI:1913275"/>
<dbReference type="CTD" id="10171"/>
<dbReference type="MGI" id="MGI:1913275">
    <property type="gene designation" value="Rcl1"/>
</dbReference>
<dbReference type="VEuPathDB" id="HostDB:ENSMUSG00000024785"/>
<dbReference type="eggNOG" id="KOG3980">
    <property type="taxonomic scope" value="Eukaryota"/>
</dbReference>
<dbReference type="GeneTree" id="ENSGT00530000063404"/>
<dbReference type="HOGENOM" id="CLU_027882_1_0_1"/>
<dbReference type="InParanoid" id="Q9JJT0"/>
<dbReference type="OMA" id="YTDQNKG"/>
<dbReference type="OrthoDB" id="1911237at2759"/>
<dbReference type="PhylomeDB" id="Q9JJT0"/>
<dbReference type="TreeFam" id="TF300831"/>
<dbReference type="Reactome" id="R-MMU-6791226">
    <property type="pathway name" value="Major pathway of rRNA processing in the nucleolus and cytosol"/>
</dbReference>
<dbReference type="BioGRID-ORCS" id="59028">
    <property type="hits" value="27 hits in 77 CRISPR screens"/>
</dbReference>
<dbReference type="ChiTaRS" id="Rcl1">
    <property type="organism name" value="mouse"/>
</dbReference>
<dbReference type="PRO" id="PR:Q9JJT0"/>
<dbReference type="Proteomes" id="UP000000589">
    <property type="component" value="Chromosome 19"/>
</dbReference>
<dbReference type="RNAct" id="Q9JJT0">
    <property type="molecule type" value="protein"/>
</dbReference>
<dbReference type="Bgee" id="ENSMUSG00000024785">
    <property type="expression patterns" value="Expressed in left lobe of liver and 255 other cell types or tissues"/>
</dbReference>
<dbReference type="ExpressionAtlas" id="Q9JJT0">
    <property type="expression patterns" value="baseline and differential"/>
</dbReference>
<dbReference type="GO" id="GO:0005730">
    <property type="term" value="C:nucleolus"/>
    <property type="evidence" value="ECO:0000314"/>
    <property type="project" value="MGI"/>
</dbReference>
<dbReference type="GO" id="GO:0032040">
    <property type="term" value="C:small-subunit processome"/>
    <property type="evidence" value="ECO:0000250"/>
    <property type="project" value="UniProtKB"/>
</dbReference>
<dbReference type="GO" id="GO:0003824">
    <property type="term" value="F:catalytic activity"/>
    <property type="evidence" value="ECO:0007669"/>
    <property type="project" value="InterPro"/>
</dbReference>
<dbReference type="GO" id="GO:0000480">
    <property type="term" value="P:endonucleolytic cleavage in 5'-ETS of tricistronic rRNA transcript (SSU-rRNA, 5.8S rRNA, LSU-rRNA)"/>
    <property type="evidence" value="ECO:0000315"/>
    <property type="project" value="MGI"/>
</dbReference>
<dbReference type="GO" id="GO:0000447">
    <property type="term" value="P:endonucleolytic cleavage in ITS1 to separate SSU-rRNA from 5.8S rRNA and LSU-rRNA from tricistronic rRNA transcript (SSU-rRNA, 5.8S rRNA, LSU-rRNA)"/>
    <property type="evidence" value="ECO:0000315"/>
    <property type="project" value="MGI"/>
</dbReference>
<dbReference type="GO" id="GO:0042274">
    <property type="term" value="P:ribosomal small subunit biogenesis"/>
    <property type="evidence" value="ECO:0000250"/>
    <property type="project" value="UniProtKB"/>
</dbReference>
<dbReference type="GO" id="GO:0006364">
    <property type="term" value="P:rRNA processing"/>
    <property type="evidence" value="ECO:0000247"/>
    <property type="project" value="MGI"/>
</dbReference>
<dbReference type="CDD" id="cd00875">
    <property type="entry name" value="RNA_Cyclase_Class_I"/>
    <property type="match status" value="1"/>
</dbReference>
<dbReference type="FunFam" id="3.30.360.20:FF:000001">
    <property type="entry name" value="RNA terminal phosphate cyclase-like 1"/>
    <property type="match status" value="1"/>
</dbReference>
<dbReference type="FunFam" id="3.65.10.20:FF:000001">
    <property type="entry name" value="RNA terminal phosphate cyclase-like 1"/>
    <property type="match status" value="1"/>
</dbReference>
<dbReference type="Gene3D" id="3.65.10.20">
    <property type="entry name" value="RNA 3'-terminal phosphate cyclase domain"/>
    <property type="match status" value="1"/>
</dbReference>
<dbReference type="Gene3D" id="3.30.360.20">
    <property type="entry name" value="RNA 3'-terminal phosphate cyclase, insert domain"/>
    <property type="match status" value="1"/>
</dbReference>
<dbReference type="InterPro" id="IPR013791">
    <property type="entry name" value="RNA3'-term_phos_cycl_insert"/>
</dbReference>
<dbReference type="InterPro" id="IPR023797">
    <property type="entry name" value="RNA3'_phos_cyclase_dom"/>
</dbReference>
<dbReference type="InterPro" id="IPR037136">
    <property type="entry name" value="RNA3'_phos_cyclase_dom_sf"/>
</dbReference>
<dbReference type="InterPro" id="IPR000228">
    <property type="entry name" value="RNA3'_term_phos_cyc"/>
</dbReference>
<dbReference type="InterPro" id="IPR016443">
    <property type="entry name" value="RNA3'_term_phos_cyc_type_2"/>
</dbReference>
<dbReference type="InterPro" id="IPR020719">
    <property type="entry name" value="RNA3'_term_phos_cycl-like_CS"/>
</dbReference>
<dbReference type="InterPro" id="IPR013792">
    <property type="entry name" value="RNA3'P_cycl/enolpyr_Trfase_a/b"/>
</dbReference>
<dbReference type="InterPro" id="IPR036553">
    <property type="entry name" value="RPTC_insert"/>
</dbReference>
<dbReference type="NCBIfam" id="TIGR03400">
    <property type="entry name" value="18S_RNA_Rcl1p"/>
    <property type="match status" value="1"/>
</dbReference>
<dbReference type="PANTHER" id="PTHR11096">
    <property type="entry name" value="RNA 3' TERMINAL PHOSPHATE CYCLASE"/>
    <property type="match status" value="1"/>
</dbReference>
<dbReference type="PANTHER" id="PTHR11096:SF1">
    <property type="entry name" value="RNA 3'-TERMINAL PHOSPHATE CYCLASE-LIKE PROTEIN"/>
    <property type="match status" value="1"/>
</dbReference>
<dbReference type="Pfam" id="PF01137">
    <property type="entry name" value="RTC"/>
    <property type="match status" value="1"/>
</dbReference>
<dbReference type="Pfam" id="PF05189">
    <property type="entry name" value="RTC_insert"/>
    <property type="match status" value="1"/>
</dbReference>
<dbReference type="PIRSF" id="PIRSF005378">
    <property type="entry name" value="RNA3'_term_phos_cycl_euk"/>
    <property type="match status" value="1"/>
</dbReference>
<dbReference type="SUPFAM" id="SSF55205">
    <property type="entry name" value="EPT/RTPC-like"/>
    <property type="match status" value="1"/>
</dbReference>
<dbReference type="PROSITE" id="PS01287">
    <property type="entry name" value="RTC"/>
    <property type="match status" value="1"/>
</dbReference>
<organism>
    <name type="scientific">Mus musculus</name>
    <name type="common">Mouse</name>
    <dbReference type="NCBI Taxonomy" id="10090"/>
    <lineage>
        <taxon>Eukaryota</taxon>
        <taxon>Metazoa</taxon>
        <taxon>Chordata</taxon>
        <taxon>Craniata</taxon>
        <taxon>Vertebrata</taxon>
        <taxon>Euteleostomi</taxon>
        <taxon>Mammalia</taxon>
        <taxon>Eutheria</taxon>
        <taxon>Euarchontoglires</taxon>
        <taxon>Glires</taxon>
        <taxon>Rodentia</taxon>
        <taxon>Myomorpha</taxon>
        <taxon>Muroidea</taxon>
        <taxon>Muridae</taxon>
        <taxon>Murinae</taxon>
        <taxon>Mus</taxon>
        <taxon>Mus</taxon>
    </lineage>
</organism>
<evidence type="ECO:0000250" key="1">
    <source>
        <dbReference type="UniProtKB" id="Q08096"/>
    </source>
</evidence>
<evidence type="ECO:0000250" key="2">
    <source>
        <dbReference type="UniProtKB" id="Q9Y2P8"/>
    </source>
</evidence>
<evidence type="ECO:0000305" key="3"/>
<reference key="1">
    <citation type="journal article" date="2000" name="EMBO J.">
        <title>Rcl1p, the yeast protein similar to the RNA 3'-phosphate cyclase, associates with U3 snoRNP and is required for 18S rRNA biogenesis.</title>
        <authorList>
            <person name="Billy E."/>
            <person name="Wegierski T."/>
            <person name="Nasr F."/>
            <person name="Filipowicz W."/>
        </authorList>
    </citation>
    <scope>NUCLEOTIDE SEQUENCE [MRNA]</scope>
</reference>
<reference key="2">
    <citation type="journal article" date="2005" name="Science">
        <title>The transcriptional landscape of the mammalian genome.</title>
        <authorList>
            <person name="Carninci P."/>
            <person name="Kasukawa T."/>
            <person name="Katayama S."/>
            <person name="Gough J."/>
            <person name="Frith M.C."/>
            <person name="Maeda N."/>
            <person name="Oyama R."/>
            <person name="Ravasi T."/>
            <person name="Lenhard B."/>
            <person name="Wells C."/>
            <person name="Kodzius R."/>
            <person name="Shimokawa K."/>
            <person name="Bajic V.B."/>
            <person name="Brenner S.E."/>
            <person name="Batalov S."/>
            <person name="Forrest A.R."/>
            <person name="Zavolan M."/>
            <person name="Davis M.J."/>
            <person name="Wilming L.G."/>
            <person name="Aidinis V."/>
            <person name="Allen J.E."/>
            <person name="Ambesi-Impiombato A."/>
            <person name="Apweiler R."/>
            <person name="Aturaliya R.N."/>
            <person name="Bailey T.L."/>
            <person name="Bansal M."/>
            <person name="Baxter L."/>
            <person name="Beisel K.W."/>
            <person name="Bersano T."/>
            <person name="Bono H."/>
            <person name="Chalk A.M."/>
            <person name="Chiu K.P."/>
            <person name="Choudhary V."/>
            <person name="Christoffels A."/>
            <person name="Clutterbuck D.R."/>
            <person name="Crowe M.L."/>
            <person name="Dalla E."/>
            <person name="Dalrymple B.P."/>
            <person name="de Bono B."/>
            <person name="Della Gatta G."/>
            <person name="di Bernardo D."/>
            <person name="Down T."/>
            <person name="Engstrom P."/>
            <person name="Fagiolini M."/>
            <person name="Faulkner G."/>
            <person name="Fletcher C.F."/>
            <person name="Fukushima T."/>
            <person name="Furuno M."/>
            <person name="Futaki S."/>
            <person name="Gariboldi M."/>
            <person name="Georgii-Hemming P."/>
            <person name="Gingeras T.R."/>
            <person name="Gojobori T."/>
            <person name="Green R.E."/>
            <person name="Gustincich S."/>
            <person name="Harbers M."/>
            <person name="Hayashi Y."/>
            <person name="Hensch T.K."/>
            <person name="Hirokawa N."/>
            <person name="Hill D."/>
            <person name="Huminiecki L."/>
            <person name="Iacono M."/>
            <person name="Ikeo K."/>
            <person name="Iwama A."/>
            <person name="Ishikawa T."/>
            <person name="Jakt M."/>
            <person name="Kanapin A."/>
            <person name="Katoh M."/>
            <person name="Kawasawa Y."/>
            <person name="Kelso J."/>
            <person name="Kitamura H."/>
            <person name="Kitano H."/>
            <person name="Kollias G."/>
            <person name="Krishnan S.P."/>
            <person name="Kruger A."/>
            <person name="Kummerfeld S.K."/>
            <person name="Kurochkin I.V."/>
            <person name="Lareau L.F."/>
            <person name="Lazarevic D."/>
            <person name="Lipovich L."/>
            <person name="Liu J."/>
            <person name="Liuni S."/>
            <person name="McWilliam S."/>
            <person name="Madan Babu M."/>
            <person name="Madera M."/>
            <person name="Marchionni L."/>
            <person name="Matsuda H."/>
            <person name="Matsuzawa S."/>
            <person name="Miki H."/>
            <person name="Mignone F."/>
            <person name="Miyake S."/>
            <person name="Morris K."/>
            <person name="Mottagui-Tabar S."/>
            <person name="Mulder N."/>
            <person name="Nakano N."/>
            <person name="Nakauchi H."/>
            <person name="Ng P."/>
            <person name="Nilsson R."/>
            <person name="Nishiguchi S."/>
            <person name="Nishikawa S."/>
            <person name="Nori F."/>
            <person name="Ohara O."/>
            <person name="Okazaki Y."/>
            <person name="Orlando V."/>
            <person name="Pang K.C."/>
            <person name="Pavan W.J."/>
            <person name="Pavesi G."/>
            <person name="Pesole G."/>
            <person name="Petrovsky N."/>
            <person name="Piazza S."/>
            <person name="Reed J."/>
            <person name="Reid J.F."/>
            <person name="Ring B.Z."/>
            <person name="Ringwald M."/>
            <person name="Rost B."/>
            <person name="Ruan Y."/>
            <person name="Salzberg S.L."/>
            <person name="Sandelin A."/>
            <person name="Schneider C."/>
            <person name="Schoenbach C."/>
            <person name="Sekiguchi K."/>
            <person name="Semple C.A."/>
            <person name="Seno S."/>
            <person name="Sessa L."/>
            <person name="Sheng Y."/>
            <person name="Shibata Y."/>
            <person name="Shimada H."/>
            <person name="Shimada K."/>
            <person name="Silva D."/>
            <person name="Sinclair B."/>
            <person name="Sperling S."/>
            <person name="Stupka E."/>
            <person name="Sugiura K."/>
            <person name="Sultana R."/>
            <person name="Takenaka Y."/>
            <person name="Taki K."/>
            <person name="Tammoja K."/>
            <person name="Tan S.L."/>
            <person name="Tang S."/>
            <person name="Taylor M.S."/>
            <person name="Tegner J."/>
            <person name="Teichmann S.A."/>
            <person name="Ueda H.R."/>
            <person name="van Nimwegen E."/>
            <person name="Verardo R."/>
            <person name="Wei C.L."/>
            <person name="Yagi K."/>
            <person name="Yamanishi H."/>
            <person name="Zabarovsky E."/>
            <person name="Zhu S."/>
            <person name="Zimmer A."/>
            <person name="Hide W."/>
            <person name="Bult C."/>
            <person name="Grimmond S.M."/>
            <person name="Teasdale R.D."/>
            <person name="Liu E.T."/>
            <person name="Brusic V."/>
            <person name="Quackenbush J."/>
            <person name="Wahlestedt C."/>
            <person name="Mattick J.S."/>
            <person name="Hume D.A."/>
            <person name="Kai C."/>
            <person name="Sasaki D."/>
            <person name="Tomaru Y."/>
            <person name="Fukuda S."/>
            <person name="Kanamori-Katayama M."/>
            <person name="Suzuki M."/>
            <person name="Aoki J."/>
            <person name="Arakawa T."/>
            <person name="Iida J."/>
            <person name="Imamura K."/>
            <person name="Itoh M."/>
            <person name="Kato T."/>
            <person name="Kawaji H."/>
            <person name="Kawagashira N."/>
            <person name="Kawashima T."/>
            <person name="Kojima M."/>
            <person name="Kondo S."/>
            <person name="Konno H."/>
            <person name="Nakano K."/>
            <person name="Ninomiya N."/>
            <person name="Nishio T."/>
            <person name="Okada M."/>
            <person name="Plessy C."/>
            <person name="Shibata K."/>
            <person name="Shiraki T."/>
            <person name="Suzuki S."/>
            <person name="Tagami M."/>
            <person name="Waki K."/>
            <person name="Watahiki A."/>
            <person name="Okamura-Oho Y."/>
            <person name="Suzuki H."/>
            <person name="Kawai J."/>
            <person name="Hayashizaki Y."/>
        </authorList>
    </citation>
    <scope>NUCLEOTIDE SEQUENCE [LARGE SCALE MRNA]</scope>
    <source>
        <strain>C57BL/6J</strain>
        <tissue>Tongue</tissue>
    </source>
</reference>
<reference key="3">
    <citation type="journal article" date="2004" name="Genome Res.">
        <title>The status, quality, and expansion of the NIH full-length cDNA project: the Mammalian Gene Collection (MGC).</title>
        <authorList>
            <consortium name="The MGC Project Team"/>
        </authorList>
    </citation>
    <scope>NUCLEOTIDE SEQUENCE [LARGE SCALE MRNA]</scope>
    <source>
        <strain>Czech II</strain>
        <tissue>Mammary gland</tissue>
    </source>
</reference>
<name>RCL1_MOUSE</name>
<gene>
    <name type="primary">Rcl1</name>
    <name type="synonym">Rnac</name>
</gene>
<accession>Q9JJT0</accession>
<protein>
    <recommendedName>
        <fullName>RNA 3'-terminal phosphate cyclase-like protein</fullName>
    </recommendedName>
</protein>
<sequence length="373" mass="40841">MATQAHSLSYAGCNFLRQRLVLSTLSGRPVKIRRIRARDDNPGLRDFEASFIRLLDKITNGSRIEINQTGTTLYYQPGLLYGGSVEHDCSVLRGIGYYLEALLCLAPFMKHPLKIVLRGVTNDQVDPSVDVLKATALPLLKQFGIDGESFELKILRRGMPPGGGGEVLFSCPVRKVLKPVQLTDPGKIKRIRGMAYSVRVSPQMANRIVDSARSILNKFIPDIYIYTDHMKGVSSGKSPGFGLSLVAETTNGTFLSAELASNPQGQGAAVLPEDLGRNCAKLLLEEIYRGGCVDSTNQSLVLLLMTLGQQDVSKVLLGPLSPYTIEFLRHLKSFFQVMFKVETKPCGEELKGGDKVLMTCVGIGFSNLSKTLK</sequence>